<dbReference type="EMBL" id="CP000887">
    <property type="protein sequence ID" value="ACD73000.1"/>
    <property type="molecule type" value="Genomic_DNA"/>
</dbReference>
<dbReference type="RefSeq" id="WP_002964699.1">
    <property type="nucleotide sequence ID" value="NC_010742.1"/>
</dbReference>
<dbReference type="SMR" id="B2S753"/>
<dbReference type="GeneID" id="97533230"/>
<dbReference type="KEGG" id="bmc:BAbS19_I15100"/>
<dbReference type="HOGENOM" id="CLU_000445_30_1_5"/>
<dbReference type="Proteomes" id="UP000002565">
    <property type="component" value="Chromosome 1"/>
</dbReference>
<dbReference type="GO" id="GO:0005829">
    <property type="term" value="C:cytosol"/>
    <property type="evidence" value="ECO:0007669"/>
    <property type="project" value="TreeGrafter"/>
</dbReference>
<dbReference type="GO" id="GO:0032993">
    <property type="term" value="C:protein-DNA complex"/>
    <property type="evidence" value="ECO:0007669"/>
    <property type="project" value="TreeGrafter"/>
</dbReference>
<dbReference type="GO" id="GO:0000156">
    <property type="term" value="F:phosphorelay response regulator activity"/>
    <property type="evidence" value="ECO:0007669"/>
    <property type="project" value="TreeGrafter"/>
</dbReference>
<dbReference type="GO" id="GO:0000976">
    <property type="term" value="F:transcription cis-regulatory region binding"/>
    <property type="evidence" value="ECO:0007669"/>
    <property type="project" value="TreeGrafter"/>
</dbReference>
<dbReference type="GO" id="GO:0006355">
    <property type="term" value="P:regulation of DNA-templated transcription"/>
    <property type="evidence" value="ECO:0007669"/>
    <property type="project" value="InterPro"/>
</dbReference>
<dbReference type="CDD" id="cd17616">
    <property type="entry name" value="REC_OmpR_CtrA"/>
    <property type="match status" value="1"/>
</dbReference>
<dbReference type="CDD" id="cd00383">
    <property type="entry name" value="trans_reg_C"/>
    <property type="match status" value="1"/>
</dbReference>
<dbReference type="FunFam" id="1.10.10.10:FF:000052">
    <property type="entry name" value="Cell cycle response regulator"/>
    <property type="match status" value="1"/>
</dbReference>
<dbReference type="FunFam" id="3.40.50.2300:FF:000011">
    <property type="entry name" value="Cell cycle response regulator CtrA"/>
    <property type="match status" value="1"/>
</dbReference>
<dbReference type="Gene3D" id="3.40.50.2300">
    <property type="match status" value="1"/>
</dbReference>
<dbReference type="Gene3D" id="6.10.250.690">
    <property type="match status" value="1"/>
</dbReference>
<dbReference type="Gene3D" id="1.10.10.10">
    <property type="entry name" value="Winged helix-like DNA-binding domain superfamily/Winged helix DNA-binding domain"/>
    <property type="match status" value="1"/>
</dbReference>
<dbReference type="InterPro" id="IPR011006">
    <property type="entry name" value="CheY-like_superfamily"/>
</dbReference>
<dbReference type="InterPro" id="IPR001867">
    <property type="entry name" value="OmpR/PhoB-type_DNA-bd"/>
</dbReference>
<dbReference type="InterPro" id="IPR001789">
    <property type="entry name" value="Sig_transdc_resp-reg_receiver"/>
</dbReference>
<dbReference type="InterPro" id="IPR039420">
    <property type="entry name" value="WalR-like"/>
</dbReference>
<dbReference type="InterPro" id="IPR036388">
    <property type="entry name" value="WH-like_DNA-bd_sf"/>
</dbReference>
<dbReference type="NCBIfam" id="NF045991">
    <property type="entry name" value="RespRegCtrARhodob"/>
    <property type="match status" value="1"/>
</dbReference>
<dbReference type="PANTHER" id="PTHR48111">
    <property type="entry name" value="REGULATOR OF RPOS"/>
    <property type="match status" value="1"/>
</dbReference>
<dbReference type="PANTHER" id="PTHR48111:SF22">
    <property type="entry name" value="REGULATOR OF RPOS"/>
    <property type="match status" value="1"/>
</dbReference>
<dbReference type="Pfam" id="PF00072">
    <property type="entry name" value="Response_reg"/>
    <property type="match status" value="1"/>
</dbReference>
<dbReference type="Pfam" id="PF00486">
    <property type="entry name" value="Trans_reg_C"/>
    <property type="match status" value="1"/>
</dbReference>
<dbReference type="SMART" id="SM00448">
    <property type="entry name" value="REC"/>
    <property type="match status" value="1"/>
</dbReference>
<dbReference type="SMART" id="SM00862">
    <property type="entry name" value="Trans_reg_C"/>
    <property type="match status" value="1"/>
</dbReference>
<dbReference type="SUPFAM" id="SSF52172">
    <property type="entry name" value="CheY-like"/>
    <property type="match status" value="1"/>
</dbReference>
<dbReference type="PROSITE" id="PS51755">
    <property type="entry name" value="OMPR_PHOB"/>
    <property type="match status" value="1"/>
</dbReference>
<dbReference type="PROSITE" id="PS50110">
    <property type="entry name" value="RESPONSE_REGULATORY"/>
    <property type="match status" value="1"/>
</dbReference>
<sequence>MRVLLIEDDSAIAQSIELMLKSESFNVYTTDLGEEGIDLGKLYDYDIILLDLNLPDMSGYEVLRTLRLSKVKTPILILSGMAGIEDKVRGLGFGADDYMTKPFHKDELIARIHAIVRRSKGHAQSVITTGDLVVNLDAKTVEVAGQRVHLTGKEYQMLELLSLRKGTTLTKEMFLNHLYGGMDEPELKIIDVFICKLRKKLDAVSGNQSYIETVWGRGYVLREPDAEMRESA</sequence>
<protein>
    <recommendedName>
        <fullName>Cell cycle response regulator CtrA</fullName>
    </recommendedName>
    <alternativeName>
        <fullName>Cell cycle transcriptional regulator A</fullName>
    </alternativeName>
</protein>
<gene>
    <name type="primary">ctrA</name>
    <name type="ordered locus">BAbS19_I15100</name>
</gene>
<feature type="chain" id="PRO_0000363195" description="Cell cycle response regulator CtrA">
    <location>
        <begin position="1"/>
        <end position="232"/>
    </location>
</feature>
<feature type="domain" description="Response regulatory" evidence="3">
    <location>
        <begin position="2"/>
        <end position="116"/>
    </location>
</feature>
<feature type="DNA-binding region" description="OmpR/PhoB-type" evidence="4">
    <location>
        <begin position="124"/>
        <end position="223"/>
    </location>
</feature>
<feature type="modified residue" description="4-aspartylphosphate" evidence="2 3">
    <location>
        <position position="51"/>
    </location>
</feature>
<name>CTRA_BRUA1</name>
<accession>B2S753</accession>
<reference key="1">
    <citation type="journal article" date="2008" name="PLoS ONE">
        <title>Genome sequence of Brucella abortus vaccine strain S19 compared to virulent strains yields candidate virulence genes.</title>
        <authorList>
            <person name="Crasta O.R."/>
            <person name="Folkerts O."/>
            <person name="Fei Z."/>
            <person name="Mane S.P."/>
            <person name="Evans C."/>
            <person name="Martino-Catt S."/>
            <person name="Bricker B."/>
            <person name="Yu G."/>
            <person name="Du L."/>
            <person name="Sobral B.W."/>
        </authorList>
    </citation>
    <scope>NUCLEOTIDE SEQUENCE [LARGE SCALE GENOMIC DNA]</scope>
    <source>
        <strain>S19</strain>
    </source>
</reference>
<proteinExistence type="inferred from homology"/>
<keyword id="KW-0963">Cytoplasm</keyword>
<keyword id="KW-0238">DNA-binding</keyword>
<keyword id="KW-0597">Phosphoprotein</keyword>
<keyword id="KW-0804">Transcription</keyword>
<keyword id="KW-0805">Transcription regulation</keyword>
<keyword id="KW-0902">Two-component regulatory system</keyword>
<organism>
    <name type="scientific">Brucella abortus (strain S19)</name>
    <dbReference type="NCBI Taxonomy" id="430066"/>
    <lineage>
        <taxon>Bacteria</taxon>
        <taxon>Pseudomonadati</taxon>
        <taxon>Pseudomonadota</taxon>
        <taxon>Alphaproteobacteria</taxon>
        <taxon>Hyphomicrobiales</taxon>
        <taxon>Brucellaceae</taxon>
        <taxon>Brucella/Ochrobactrum group</taxon>
        <taxon>Brucella</taxon>
    </lineage>
</organism>
<comment type="function">
    <text evidence="1 2">Component of a regulatory phosphorelay system that controls B.abortus cell growth, division, and intracellular survival inside mammalian host cells. This signaling pathway is composed of CckA, ChpT, CtrA and CpdR. CtrA is a response regulator substrate of ChpT. When phosphorylated, directly regulates the expression of ccrM. Is also probably involved in the transcriptional regulation of rpoD, pleC, minC and ftsE genes.</text>
</comment>
<comment type="subunit">
    <text evidence="1">Forms an asymmetric heterotetramer with ChpT (2:2). There are at least two modes of interaction between ChpT and CtrA, only one of which is competent to catalyze His-Asp phosphoryl transfer.</text>
</comment>
<comment type="subcellular location">
    <subcellularLocation>
        <location evidence="1">Cytoplasm</location>
    </subcellularLocation>
</comment>
<comment type="PTM">
    <text evidence="1 2">Is phosphorylated by ChpT-P on Asp-51.</text>
</comment>
<evidence type="ECO:0000250" key="1">
    <source>
        <dbReference type="UniProtKB" id="Q2YQA4"/>
    </source>
</evidence>
<evidence type="ECO:0000250" key="2">
    <source>
        <dbReference type="UniProtKB" id="Q9ZHS1"/>
    </source>
</evidence>
<evidence type="ECO:0000255" key="3">
    <source>
        <dbReference type="PROSITE-ProRule" id="PRU00169"/>
    </source>
</evidence>
<evidence type="ECO:0000255" key="4">
    <source>
        <dbReference type="PROSITE-ProRule" id="PRU01091"/>
    </source>
</evidence>